<proteinExistence type="evidence at protein level"/>
<protein>
    <recommendedName>
        <fullName evidence="1">Proline--tRNA ligase</fullName>
        <ecNumber evidence="1">6.1.1.15</ecNumber>
    </recommendedName>
    <alternativeName>
        <fullName evidence="1">Prolyl-tRNA synthetase</fullName>
        <shortName evidence="1">ProRS</shortName>
    </alternativeName>
</protein>
<sequence length="567" mass="63859">MKQSKVFIPTMRDVPSEAEAQSHRLLLKSGLIKQSTSGIYSYLPLATRVLNNITAIVRQEMERIDSVEILMPALQQAELWEESGRWGAYGPELMRLQDRHGRQFALGPTHEELVTSIVRNELKSYKQLPMTLFQIQSKFRDEKRPRFGLLRGREFIMKDAYSFHADEASLDQTYQDMYQAYSRIFERVGINARPVVADSGAIGGSHTHEFMALSAIGEDTIVYSKESDYAANIEKAEVVYEPNHKHSTVQPLEKIETPNVKTAQELADFLGRPVDEIVKTMIFKVDGEYIMVLVRGHHEINDIKLKSYFGTDNIELATQDEIVNLVGANPGSLGPVIDKEIKIYADNFVQDLNNLVVGANEDGYHLINVNVGRDFNVDEYGDFRFILEGEKLSDGSGVAHFAEGIEVGQVFKLGTKYSESMNATFLDNQGKAQPLIMGCYGIGISRTLSAIVEQNHDDNGIVWPKSVTPFDLHLISINPKKDDQRELADALYAEFNTKFDVLYDDRQERAGVKFNDADLIGLPLRIVVGKRASEGIVEVKERLTGDSEEVHIDDLMTVITNKYDNLK</sequence>
<name>SYP_STAAN</name>
<gene>
    <name evidence="1" type="primary">proS</name>
    <name type="ordered locus">SA1106</name>
</gene>
<accession>Q7A5Y3</accession>
<feature type="chain" id="PRO_0000139340" description="Proline--tRNA ligase">
    <location>
        <begin position="1"/>
        <end position="567"/>
    </location>
</feature>
<keyword id="KW-0030">Aminoacyl-tRNA synthetase</keyword>
<keyword id="KW-0067">ATP-binding</keyword>
<keyword id="KW-0963">Cytoplasm</keyword>
<keyword id="KW-0436">Ligase</keyword>
<keyword id="KW-0547">Nucleotide-binding</keyword>
<keyword id="KW-0648">Protein biosynthesis</keyword>
<dbReference type="EC" id="6.1.1.15" evidence="1"/>
<dbReference type="EMBL" id="BA000018">
    <property type="protein sequence ID" value="BAB42358.1"/>
    <property type="molecule type" value="Genomic_DNA"/>
</dbReference>
<dbReference type="PIR" id="B89900">
    <property type="entry name" value="B89900"/>
</dbReference>
<dbReference type="RefSeq" id="WP_000814094.1">
    <property type="nucleotide sequence ID" value="NC_002745.2"/>
</dbReference>
<dbReference type="SMR" id="Q7A5Y3"/>
<dbReference type="EnsemblBacteria" id="BAB42358">
    <property type="protein sequence ID" value="BAB42358"/>
    <property type="gene ID" value="BAB42358"/>
</dbReference>
<dbReference type="KEGG" id="sau:SA1106"/>
<dbReference type="HOGENOM" id="CLU_016739_0_0_9"/>
<dbReference type="GO" id="GO:0005829">
    <property type="term" value="C:cytosol"/>
    <property type="evidence" value="ECO:0007669"/>
    <property type="project" value="TreeGrafter"/>
</dbReference>
<dbReference type="GO" id="GO:0002161">
    <property type="term" value="F:aminoacyl-tRNA deacylase activity"/>
    <property type="evidence" value="ECO:0007669"/>
    <property type="project" value="InterPro"/>
</dbReference>
<dbReference type="GO" id="GO:0005524">
    <property type="term" value="F:ATP binding"/>
    <property type="evidence" value="ECO:0007669"/>
    <property type="project" value="UniProtKB-UniRule"/>
</dbReference>
<dbReference type="GO" id="GO:0140096">
    <property type="term" value="F:catalytic activity, acting on a protein"/>
    <property type="evidence" value="ECO:0007669"/>
    <property type="project" value="UniProtKB-ARBA"/>
</dbReference>
<dbReference type="GO" id="GO:0004827">
    <property type="term" value="F:proline-tRNA ligase activity"/>
    <property type="evidence" value="ECO:0007669"/>
    <property type="project" value="UniProtKB-UniRule"/>
</dbReference>
<dbReference type="GO" id="GO:0016740">
    <property type="term" value="F:transferase activity"/>
    <property type="evidence" value="ECO:0007669"/>
    <property type="project" value="UniProtKB-ARBA"/>
</dbReference>
<dbReference type="GO" id="GO:0006433">
    <property type="term" value="P:prolyl-tRNA aminoacylation"/>
    <property type="evidence" value="ECO:0007669"/>
    <property type="project" value="UniProtKB-UniRule"/>
</dbReference>
<dbReference type="CDD" id="cd04334">
    <property type="entry name" value="ProRS-INS"/>
    <property type="match status" value="1"/>
</dbReference>
<dbReference type="CDD" id="cd00861">
    <property type="entry name" value="ProRS_anticodon_short"/>
    <property type="match status" value="1"/>
</dbReference>
<dbReference type="CDD" id="cd00779">
    <property type="entry name" value="ProRS_core_prok"/>
    <property type="match status" value="1"/>
</dbReference>
<dbReference type="FunFam" id="3.30.930.10:FF:000043">
    <property type="entry name" value="Proline--tRNA ligase"/>
    <property type="match status" value="1"/>
</dbReference>
<dbReference type="FunFam" id="3.40.50.800:FF:000011">
    <property type="entry name" value="Proline--tRNA ligase"/>
    <property type="match status" value="1"/>
</dbReference>
<dbReference type="Gene3D" id="3.40.50.800">
    <property type="entry name" value="Anticodon-binding domain"/>
    <property type="match status" value="1"/>
</dbReference>
<dbReference type="Gene3D" id="3.30.930.10">
    <property type="entry name" value="Bira Bifunctional Protein, Domain 2"/>
    <property type="match status" value="2"/>
</dbReference>
<dbReference type="Gene3D" id="3.90.960.10">
    <property type="entry name" value="YbaK/aminoacyl-tRNA synthetase-associated domain"/>
    <property type="match status" value="1"/>
</dbReference>
<dbReference type="HAMAP" id="MF_01569">
    <property type="entry name" value="Pro_tRNA_synth_type1"/>
    <property type="match status" value="1"/>
</dbReference>
<dbReference type="InterPro" id="IPR002314">
    <property type="entry name" value="aa-tRNA-synt_IIb"/>
</dbReference>
<dbReference type="InterPro" id="IPR006195">
    <property type="entry name" value="aa-tRNA-synth_II"/>
</dbReference>
<dbReference type="InterPro" id="IPR045864">
    <property type="entry name" value="aa-tRNA-synth_II/BPL/LPL"/>
</dbReference>
<dbReference type="InterPro" id="IPR004154">
    <property type="entry name" value="Anticodon-bd"/>
</dbReference>
<dbReference type="InterPro" id="IPR036621">
    <property type="entry name" value="Anticodon-bd_dom_sf"/>
</dbReference>
<dbReference type="InterPro" id="IPR002316">
    <property type="entry name" value="Pro-tRNA-ligase_IIa"/>
</dbReference>
<dbReference type="InterPro" id="IPR004500">
    <property type="entry name" value="Pro-tRNA-synth_IIa_bac-type"/>
</dbReference>
<dbReference type="InterPro" id="IPR023717">
    <property type="entry name" value="Pro-tRNA-Synthase_IIa_type1"/>
</dbReference>
<dbReference type="InterPro" id="IPR050062">
    <property type="entry name" value="Pro-tRNA_synthetase"/>
</dbReference>
<dbReference type="InterPro" id="IPR044140">
    <property type="entry name" value="ProRS_anticodon_short"/>
</dbReference>
<dbReference type="InterPro" id="IPR033730">
    <property type="entry name" value="ProRS_core_prok"/>
</dbReference>
<dbReference type="InterPro" id="IPR036754">
    <property type="entry name" value="YbaK/aa-tRNA-synt-asso_dom_sf"/>
</dbReference>
<dbReference type="InterPro" id="IPR007214">
    <property type="entry name" value="YbaK/aa-tRNA-synth-assoc-dom"/>
</dbReference>
<dbReference type="NCBIfam" id="NF006625">
    <property type="entry name" value="PRK09194.1"/>
    <property type="match status" value="1"/>
</dbReference>
<dbReference type="NCBIfam" id="TIGR00409">
    <property type="entry name" value="proS_fam_II"/>
    <property type="match status" value="1"/>
</dbReference>
<dbReference type="PANTHER" id="PTHR42753">
    <property type="entry name" value="MITOCHONDRIAL RIBOSOME PROTEIN L39/PROLYL-TRNA LIGASE FAMILY MEMBER"/>
    <property type="match status" value="1"/>
</dbReference>
<dbReference type="PANTHER" id="PTHR42753:SF2">
    <property type="entry name" value="PROLINE--TRNA LIGASE"/>
    <property type="match status" value="1"/>
</dbReference>
<dbReference type="Pfam" id="PF03129">
    <property type="entry name" value="HGTP_anticodon"/>
    <property type="match status" value="1"/>
</dbReference>
<dbReference type="Pfam" id="PF00587">
    <property type="entry name" value="tRNA-synt_2b"/>
    <property type="match status" value="1"/>
</dbReference>
<dbReference type="Pfam" id="PF04073">
    <property type="entry name" value="tRNA_edit"/>
    <property type="match status" value="1"/>
</dbReference>
<dbReference type="PRINTS" id="PR01046">
    <property type="entry name" value="TRNASYNTHPRO"/>
</dbReference>
<dbReference type="SUPFAM" id="SSF52954">
    <property type="entry name" value="Class II aaRS ABD-related"/>
    <property type="match status" value="1"/>
</dbReference>
<dbReference type="SUPFAM" id="SSF55681">
    <property type="entry name" value="Class II aaRS and biotin synthetases"/>
    <property type="match status" value="1"/>
</dbReference>
<dbReference type="SUPFAM" id="SSF55826">
    <property type="entry name" value="YbaK/ProRS associated domain"/>
    <property type="match status" value="1"/>
</dbReference>
<dbReference type="PROSITE" id="PS50862">
    <property type="entry name" value="AA_TRNA_LIGASE_II"/>
    <property type="match status" value="1"/>
</dbReference>
<comment type="function">
    <text evidence="1">Catalyzes the attachment of proline to tRNA(Pro) in a two-step reaction: proline is first activated by ATP to form Pro-AMP and then transferred to the acceptor end of tRNA(Pro). As ProRS can inadvertently accommodate and process non-cognate amino acids such as alanine and cysteine, to avoid such errors it has two additional distinct editing activities against alanine. One activity is designated as 'pretransfer' editing and involves the tRNA(Pro)-independent hydrolysis of activated Ala-AMP. The other activity is designated 'posttransfer' editing and involves deacylation of mischarged Ala-tRNA(Pro). The misacylated Cys-tRNA(Pro) is not edited by ProRS.</text>
</comment>
<comment type="catalytic activity">
    <reaction evidence="1">
        <text>tRNA(Pro) + L-proline + ATP = L-prolyl-tRNA(Pro) + AMP + diphosphate</text>
        <dbReference type="Rhea" id="RHEA:14305"/>
        <dbReference type="Rhea" id="RHEA-COMP:9700"/>
        <dbReference type="Rhea" id="RHEA-COMP:9702"/>
        <dbReference type="ChEBI" id="CHEBI:30616"/>
        <dbReference type="ChEBI" id="CHEBI:33019"/>
        <dbReference type="ChEBI" id="CHEBI:60039"/>
        <dbReference type="ChEBI" id="CHEBI:78442"/>
        <dbReference type="ChEBI" id="CHEBI:78532"/>
        <dbReference type="ChEBI" id="CHEBI:456215"/>
        <dbReference type="EC" id="6.1.1.15"/>
    </reaction>
</comment>
<comment type="subunit">
    <text evidence="1">Homodimer.</text>
</comment>
<comment type="subcellular location">
    <subcellularLocation>
        <location evidence="1">Cytoplasm</location>
    </subcellularLocation>
</comment>
<comment type="domain">
    <text evidence="1">Consists of three domains: the N-terminal catalytic domain, the editing domain and the C-terminal anticodon-binding domain.</text>
</comment>
<comment type="similarity">
    <text evidence="1">Belongs to the class-II aminoacyl-tRNA synthetase family. ProS type 1 subfamily.</text>
</comment>
<evidence type="ECO:0000255" key="1">
    <source>
        <dbReference type="HAMAP-Rule" id="MF_01569"/>
    </source>
</evidence>
<reference key="1">
    <citation type="journal article" date="2001" name="Lancet">
        <title>Whole genome sequencing of meticillin-resistant Staphylococcus aureus.</title>
        <authorList>
            <person name="Kuroda M."/>
            <person name="Ohta T."/>
            <person name="Uchiyama I."/>
            <person name="Baba T."/>
            <person name="Yuzawa H."/>
            <person name="Kobayashi I."/>
            <person name="Cui L."/>
            <person name="Oguchi A."/>
            <person name="Aoki K."/>
            <person name="Nagai Y."/>
            <person name="Lian J.-Q."/>
            <person name="Ito T."/>
            <person name="Kanamori M."/>
            <person name="Matsumaru H."/>
            <person name="Maruyama A."/>
            <person name="Murakami H."/>
            <person name="Hosoyama A."/>
            <person name="Mizutani-Ui Y."/>
            <person name="Takahashi N.K."/>
            <person name="Sawano T."/>
            <person name="Inoue R."/>
            <person name="Kaito C."/>
            <person name="Sekimizu K."/>
            <person name="Hirakawa H."/>
            <person name="Kuhara S."/>
            <person name="Goto S."/>
            <person name="Yabuzaki J."/>
            <person name="Kanehisa M."/>
            <person name="Yamashita A."/>
            <person name="Oshima K."/>
            <person name="Furuya K."/>
            <person name="Yoshino C."/>
            <person name="Shiba T."/>
            <person name="Hattori M."/>
            <person name="Ogasawara N."/>
            <person name="Hayashi H."/>
            <person name="Hiramatsu K."/>
        </authorList>
    </citation>
    <scope>NUCLEOTIDE SEQUENCE [LARGE SCALE GENOMIC DNA]</scope>
    <source>
        <strain>N315</strain>
    </source>
</reference>
<reference key="2">
    <citation type="submission" date="2007-10" db="UniProtKB">
        <title>Shotgun proteomic analysis of total and membrane protein extracts of S. aureus strain N315.</title>
        <authorList>
            <person name="Vaezzadeh A.R."/>
            <person name="Deshusses J."/>
            <person name="Lescuyer P."/>
            <person name="Hochstrasser D.F."/>
        </authorList>
    </citation>
    <scope>IDENTIFICATION BY MASS SPECTROMETRY [LARGE SCALE ANALYSIS]</scope>
    <source>
        <strain>N315</strain>
    </source>
</reference>
<organism>
    <name type="scientific">Staphylococcus aureus (strain N315)</name>
    <dbReference type="NCBI Taxonomy" id="158879"/>
    <lineage>
        <taxon>Bacteria</taxon>
        <taxon>Bacillati</taxon>
        <taxon>Bacillota</taxon>
        <taxon>Bacilli</taxon>
        <taxon>Bacillales</taxon>
        <taxon>Staphylococcaceae</taxon>
        <taxon>Staphylococcus</taxon>
    </lineage>
</organism>